<proteinExistence type="inferred from homology"/>
<protein>
    <recommendedName>
        <fullName evidence="1">NADH-quinone oxidoreductase subunit H</fullName>
        <ecNumber evidence="1">7.1.1.-</ecNumber>
    </recommendedName>
    <alternativeName>
        <fullName evidence="1">NADH dehydrogenase I subunit H</fullName>
    </alternativeName>
    <alternativeName>
        <fullName evidence="1">NDH-1 subunit H</fullName>
    </alternativeName>
</protein>
<name>NUOH_MYCBT</name>
<organism>
    <name type="scientific">Mycobacterium bovis (strain BCG / Tokyo 172 / ATCC 35737 / TMC 1019)</name>
    <dbReference type="NCBI Taxonomy" id="561275"/>
    <lineage>
        <taxon>Bacteria</taxon>
        <taxon>Bacillati</taxon>
        <taxon>Actinomycetota</taxon>
        <taxon>Actinomycetes</taxon>
        <taxon>Mycobacteriales</taxon>
        <taxon>Mycobacteriaceae</taxon>
        <taxon>Mycobacterium</taxon>
        <taxon>Mycobacterium tuberculosis complex</taxon>
    </lineage>
</organism>
<sequence>MTTFGHDTWWLVAAKAIAVFVFLMLTVLVAILAERKLLGRMQLRPGPNRVGPKGALQSLADGIKLALKESITPGGIDRFVYFVAPIISVIPAFTAFAFIPFGPEVSVFGHRTPLQITDLPVAVLFILGLSAIGVYGIVLGGWASGSTYPLLGGVRSTAQVISYEVAMGLSFATVFLMAGTMSTSQIVAAQDGVWYAFLLLPSFVIYLISMVGETNRAPFDLPEAEGELVAGFHTEYSSLKFAMFMLAEYVNMTTVSALAATLFFGGWHAPWPLNMWASANTGWWPLIWFTAKVWGFLFIYFWLRATLPRLRYDQFMALGWKLLIPVSLVWVMVAAIIRSLRNQGYQYWTPTLVFSSIVVAAAMVLLLRKPLSAPGARASARQRGDEGTSPEPAFPTPPLLAGATKENAGG</sequence>
<accession>C1AGR9</accession>
<dbReference type="EC" id="7.1.1.-" evidence="1"/>
<dbReference type="EMBL" id="AP010918">
    <property type="protein sequence ID" value="BAH27448.1"/>
    <property type="molecule type" value="Genomic_DNA"/>
</dbReference>
<dbReference type="RefSeq" id="WP_003416445.1">
    <property type="nucleotide sequence ID" value="NZ_CP014566.1"/>
</dbReference>
<dbReference type="SMR" id="C1AGR9"/>
<dbReference type="GeneID" id="45427139"/>
<dbReference type="KEGG" id="mbt:JTY_3170"/>
<dbReference type="HOGENOM" id="CLU_015134_0_0_11"/>
<dbReference type="GO" id="GO:0005886">
    <property type="term" value="C:plasma membrane"/>
    <property type="evidence" value="ECO:0007669"/>
    <property type="project" value="UniProtKB-SubCell"/>
</dbReference>
<dbReference type="GO" id="GO:0003954">
    <property type="term" value="F:NADH dehydrogenase activity"/>
    <property type="evidence" value="ECO:0007669"/>
    <property type="project" value="TreeGrafter"/>
</dbReference>
<dbReference type="GO" id="GO:0016655">
    <property type="term" value="F:oxidoreductase activity, acting on NAD(P)H, quinone or similar compound as acceptor"/>
    <property type="evidence" value="ECO:0007669"/>
    <property type="project" value="UniProtKB-UniRule"/>
</dbReference>
<dbReference type="GO" id="GO:0048038">
    <property type="term" value="F:quinone binding"/>
    <property type="evidence" value="ECO:0007669"/>
    <property type="project" value="UniProtKB-KW"/>
</dbReference>
<dbReference type="GO" id="GO:0009060">
    <property type="term" value="P:aerobic respiration"/>
    <property type="evidence" value="ECO:0007669"/>
    <property type="project" value="TreeGrafter"/>
</dbReference>
<dbReference type="HAMAP" id="MF_01350">
    <property type="entry name" value="NDH1_NuoH"/>
    <property type="match status" value="1"/>
</dbReference>
<dbReference type="InterPro" id="IPR001694">
    <property type="entry name" value="NADH_UbQ_OxRdtase_su1/FPO"/>
</dbReference>
<dbReference type="InterPro" id="IPR018086">
    <property type="entry name" value="NADH_UbQ_OxRdtase_su1_CS"/>
</dbReference>
<dbReference type="NCBIfam" id="NF004741">
    <property type="entry name" value="PRK06076.1-2"/>
    <property type="match status" value="1"/>
</dbReference>
<dbReference type="NCBIfam" id="NF004743">
    <property type="entry name" value="PRK06076.1-4"/>
    <property type="match status" value="1"/>
</dbReference>
<dbReference type="PANTHER" id="PTHR11432">
    <property type="entry name" value="NADH DEHYDROGENASE SUBUNIT 1"/>
    <property type="match status" value="1"/>
</dbReference>
<dbReference type="PANTHER" id="PTHR11432:SF3">
    <property type="entry name" value="NADH-UBIQUINONE OXIDOREDUCTASE CHAIN 1"/>
    <property type="match status" value="1"/>
</dbReference>
<dbReference type="Pfam" id="PF00146">
    <property type="entry name" value="NADHdh"/>
    <property type="match status" value="1"/>
</dbReference>
<dbReference type="PROSITE" id="PS00667">
    <property type="entry name" value="COMPLEX1_ND1_1"/>
    <property type="match status" value="1"/>
</dbReference>
<dbReference type="PROSITE" id="PS00668">
    <property type="entry name" value="COMPLEX1_ND1_2"/>
    <property type="match status" value="1"/>
</dbReference>
<gene>
    <name evidence="1" type="primary">nuoH</name>
    <name type="ordered locus">JTY_3170</name>
</gene>
<feature type="chain" id="PRO_1000166630" description="NADH-quinone oxidoreductase subunit H">
    <location>
        <begin position="1"/>
        <end position="410"/>
    </location>
</feature>
<feature type="transmembrane region" description="Helical" evidence="1">
    <location>
        <begin position="11"/>
        <end position="31"/>
    </location>
</feature>
<feature type="transmembrane region" description="Helical" evidence="1">
    <location>
        <begin position="79"/>
        <end position="99"/>
    </location>
</feature>
<feature type="transmembrane region" description="Helical" evidence="1">
    <location>
        <begin position="119"/>
        <end position="139"/>
    </location>
</feature>
<feature type="transmembrane region" description="Helical" evidence="1">
    <location>
        <begin position="160"/>
        <end position="180"/>
    </location>
</feature>
<feature type="transmembrane region" description="Helical" evidence="1">
    <location>
        <begin position="192"/>
        <end position="212"/>
    </location>
</feature>
<feature type="transmembrane region" description="Helical" evidence="1">
    <location>
        <begin position="257"/>
        <end position="277"/>
    </location>
</feature>
<feature type="transmembrane region" description="Helical" evidence="1">
    <location>
        <begin position="283"/>
        <end position="303"/>
    </location>
</feature>
<feature type="transmembrane region" description="Helical" evidence="1">
    <location>
        <begin position="317"/>
        <end position="337"/>
    </location>
</feature>
<feature type="transmembrane region" description="Helical" evidence="1">
    <location>
        <begin position="347"/>
        <end position="367"/>
    </location>
</feature>
<feature type="region of interest" description="Disordered" evidence="2">
    <location>
        <begin position="376"/>
        <end position="410"/>
    </location>
</feature>
<evidence type="ECO:0000255" key="1">
    <source>
        <dbReference type="HAMAP-Rule" id="MF_01350"/>
    </source>
</evidence>
<evidence type="ECO:0000256" key="2">
    <source>
        <dbReference type="SAM" id="MobiDB-lite"/>
    </source>
</evidence>
<reference key="1">
    <citation type="journal article" date="2009" name="Vaccine">
        <title>Whole genome sequence analysis of Mycobacterium bovis bacillus Calmette-Guerin (BCG) Tokyo 172: a comparative study of BCG vaccine substrains.</title>
        <authorList>
            <person name="Seki M."/>
            <person name="Honda I."/>
            <person name="Fujita I."/>
            <person name="Yano I."/>
            <person name="Yamamoto S."/>
            <person name="Koyama A."/>
        </authorList>
    </citation>
    <scope>NUCLEOTIDE SEQUENCE [LARGE SCALE GENOMIC DNA]</scope>
    <source>
        <strain>BCG / Tokyo 172 / ATCC 35737 / TMC 1019</strain>
    </source>
</reference>
<comment type="function">
    <text evidence="1">NDH-1 shuttles electrons from NADH, via FMN and iron-sulfur (Fe-S) centers, to quinones in the respiratory chain. The immediate electron acceptor for the enzyme in this species is believed to be menaquinone. Couples the redox reaction to proton translocation (for every two electrons transferred, four hydrogen ions are translocated across the cytoplasmic membrane), and thus conserves the redox energy in a proton gradient.</text>
</comment>
<comment type="catalytic activity">
    <reaction evidence="1">
        <text>a quinone + NADH + 5 H(+)(in) = a quinol + NAD(+) + 4 H(+)(out)</text>
        <dbReference type="Rhea" id="RHEA:57888"/>
        <dbReference type="ChEBI" id="CHEBI:15378"/>
        <dbReference type="ChEBI" id="CHEBI:24646"/>
        <dbReference type="ChEBI" id="CHEBI:57540"/>
        <dbReference type="ChEBI" id="CHEBI:57945"/>
        <dbReference type="ChEBI" id="CHEBI:132124"/>
    </reaction>
</comment>
<comment type="subunit">
    <text evidence="1">NDH-1 is composed of 14 different subunits. Subunits NuoA, H, J, K, L, M, N constitute the membrane sector of the complex.</text>
</comment>
<comment type="subcellular location">
    <subcellularLocation>
        <location evidence="1">Cell membrane</location>
        <topology evidence="1">Multi-pass membrane protein</topology>
    </subcellularLocation>
</comment>
<comment type="similarity">
    <text evidence="1">Belongs to the complex I subunit 1 family.</text>
</comment>
<keyword id="KW-1003">Cell membrane</keyword>
<keyword id="KW-0472">Membrane</keyword>
<keyword id="KW-0520">NAD</keyword>
<keyword id="KW-0874">Quinone</keyword>
<keyword id="KW-1278">Translocase</keyword>
<keyword id="KW-0812">Transmembrane</keyword>
<keyword id="KW-1133">Transmembrane helix</keyword>